<name>RS12_ECO5E</name>
<sequence length="124" mass="13737">MATVNQLVRKPRARKVAKSNVPALEACPQKRGVCTRVYTTTPKKPNSALRKVCRVRLTNGFEVTSYIGGEGHNLQEHSVILIRGGRVKDLPGVRYHTVRGALDCSGVKDRKQARSKYGVKRPKA</sequence>
<accession>B5YTP9</accession>
<organism>
    <name type="scientific">Escherichia coli O157:H7 (strain EC4115 / EHEC)</name>
    <dbReference type="NCBI Taxonomy" id="444450"/>
    <lineage>
        <taxon>Bacteria</taxon>
        <taxon>Pseudomonadati</taxon>
        <taxon>Pseudomonadota</taxon>
        <taxon>Gammaproteobacteria</taxon>
        <taxon>Enterobacterales</taxon>
        <taxon>Enterobacteriaceae</taxon>
        <taxon>Escherichia</taxon>
    </lineage>
</organism>
<comment type="function">
    <text evidence="2">With S4 and S5 plays an important role in translational accuracy.</text>
</comment>
<comment type="function">
    <text evidence="2">Interacts with and stabilizes bases of the 16S rRNA that are involved in tRNA selection in the A site and with the mRNA backbone. Located at the interface of the 30S and 50S subunits, it traverses the body of the 30S subunit contacting proteins on the other side and probably holding the rRNA structure together. The combined cluster of proteins S8, S12 and S17 appears to hold together the shoulder and platform of the 30S subunit.</text>
</comment>
<comment type="subunit">
    <text evidence="2">Part of the 30S ribosomal subunit. Contacts proteins S8 and S17. May interact with IF1 in the 30S initiation complex.</text>
</comment>
<comment type="similarity">
    <text evidence="2">Belongs to the universal ribosomal protein uS12 family.</text>
</comment>
<proteinExistence type="inferred from homology"/>
<keyword id="KW-0007">Acetylation</keyword>
<keyword id="KW-0488">Methylation</keyword>
<keyword id="KW-0687">Ribonucleoprotein</keyword>
<keyword id="KW-0689">Ribosomal protein</keyword>
<keyword id="KW-0694">RNA-binding</keyword>
<keyword id="KW-0699">rRNA-binding</keyword>
<keyword id="KW-0820">tRNA-binding</keyword>
<dbReference type="EMBL" id="CP001164">
    <property type="protein sequence ID" value="ACI34684.1"/>
    <property type="molecule type" value="Genomic_DNA"/>
</dbReference>
<dbReference type="RefSeq" id="WP_000246815.1">
    <property type="nucleotide sequence ID" value="NC_011353.1"/>
</dbReference>
<dbReference type="SMR" id="B5YTP9"/>
<dbReference type="GeneID" id="98390450"/>
<dbReference type="KEGG" id="ecf:ECH74115_4651"/>
<dbReference type="HOGENOM" id="CLU_104295_1_2_6"/>
<dbReference type="GO" id="GO:0015935">
    <property type="term" value="C:small ribosomal subunit"/>
    <property type="evidence" value="ECO:0007669"/>
    <property type="project" value="InterPro"/>
</dbReference>
<dbReference type="GO" id="GO:0019843">
    <property type="term" value="F:rRNA binding"/>
    <property type="evidence" value="ECO:0007669"/>
    <property type="project" value="UniProtKB-UniRule"/>
</dbReference>
<dbReference type="GO" id="GO:0003735">
    <property type="term" value="F:structural constituent of ribosome"/>
    <property type="evidence" value="ECO:0007669"/>
    <property type="project" value="InterPro"/>
</dbReference>
<dbReference type="GO" id="GO:0000049">
    <property type="term" value="F:tRNA binding"/>
    <property type="evidence" value="ECO:0007669"/>
    <property type="project" value="UniProtKB-UniRule"/>
</dbReference>
<dbReference type="GO" id="GO:0006412">
    <property type="term" value="P:translation"/>
    <property type="evidence" value="ECO:0007669"/>
    <property type="project" value="UniProtKB-UniRule"/>
</dbReference>
<dbReference type="CDD" id="cd03368">
    <property type="entry name" value="Ribosomal_S12"/>
    <property type="match status" value="1"/>
</dbReference>
<dbReference type="FunFam" id="2.40.50.140:FF:000001">
    <property type="entry name" value="30S ribosomal protein S12"/>
    <property type="match status" value="1"/>
</dbReference>
<dbReference type="Gene3D" id="2.40.50.140">
    <property type="entry name" value="Nucleic acid-binding proteins"/>
    <property type="match status" value="1"/>
</dbReference>
<dbReference type="HAMAP" id="MF_00403_B">
    <property type="entry name" value="Ribosomal_uS12_B"/>
    <property type="match status" value="1"/>
</dbReference>
<dbReference type="InterPro" id="IPR012340">
    <property type="entry name" value="NA-bd_OB-fold"/>
</dbReference>
<dbReference type="InterPro" id="IPR006032">
    <property type="entry name" value="Ribosomal_uS12"/>
</dbReference>
<dbReference type="InterPro" id="IPR005679">
    <property type="entry name" value="Ribosomal_uS12_bac"/>
</dbReference>
<dbReference type="NCBIfam" id="TIGR00981">
    <property type="entry name" value="rpsL_bact"/>
    <property type="match status" value="1"/>
</dbReference>
<dbReference type="PANTHER" id="PTHR11652">
    <property type="entry name" value="30S RIBOSOMAL PROTEIN S12 FAMILY MEMBER"/>
    <property type="match status" value="1"/>
</dbReference>
<dbReference type="Pfam" id="PF00164">
    <property type="entry name" value="Ribosom_S12_S23"/>
    <property type="match status" value="1"/>
</dbReference>
<dbReference type="PIRSF" id="PIRSF002133">
    <property type="entry name" value="Ribosomal_S12/S23"/>
    <property type="match status" value="1"/>
</dbReference>
<dbReference type="PRINTS" id="PR01034">
    <property type="entry name" value="RIBOSOMALS12"/>
</dbReference>
<dbReference type="SUPFAM" id="SSF50249">
    <property type="entry name" value="Nucleic acid-binding proteins"/>
    <property type="match status" value="1"/>
</dbReference>
<dbReference type="PROSITE" id="PS00055">
    <property type="entry name" value="RIBOSOMAL_S12"/>
    <property type="match status" value="1"/>
</dbReference>
<protein>
    <recommendedName>
        <fullName evidence="2">Small ribosomal subunit protein uS12</fullName>
    </recommendedName>
    <alternativeName>
        <fullName evidence="3">30S ribosomal protein S12</fullName>
    </alternativeName>
</protein>
<evidence type="ECO:0000250" key="1"/>
<evidence type="ECO:0000255" key="2">
    <source>
        <dbReference type="HAMAP-Rule" id="MF_00403"/>
    </source>
</evidence>
<evidence type="ECO:0000305" key="3"/>
<gene>
    <name evidence="2" type="primary">rpsL</name>
    <name type="ordered locus">ECH74115_4651</name>
</gene>
<reference key="1">
    <citation type="journal article" date="2011" name="Proc. Natl. Acad. Sci. U.S.A.">
        <title>Genomic anatomy of Escherichia coli O157:H7 outbreaks.</title>
        <authorList>
            <person name="Eppinger M."/>
            <person name="Mammel M.K."/>
            <person name="Leclerc J.E."/>
            <person name="Ravel J."/>
            <person name="Cebula T.A."/>
        </authorList>
    </citation>
    <scope>NUCLEOTIDE SEQUENCE [LARGE SCALE GENOMIC DNA]</scope>
    <source>
        <strain>EC4115 / EHEC</strain>
    </source>
</reference>
<feature type="chain" id="PRO_1000194163" description="Small ribosomal subunit protein uS12">
    <location>
        <begin position="1"/>
        <end position="124"/>
    </location>
</feature>
<feature type="modified residue" description="3-methylthioaspartic acid" evidence="1">
    <location>
        <position position="89"/>
    </location>
</feature>
<feature type="modified residue" description="N6-acetyllysine" evidence="2">
    <location>
        <position position="108"/>
    </location>
</feature>